<comment type="function">
    <text evidence="1">Required for the formation of a threonylcarbamoyl group on adenosine at position 37 (t(6)A37) in tRNAs that read codons beginning with adenine. Is involved in the transfer of the threonylcarbamoyl moiety of threonylcarbamoyl-AMP (TC-AMP) to the N6 group of A37, together with TsaE and TsaB. TsaD likely plays a direct catalytic role in this reaction.</text>
</comment>
<comment type="catalytic activity">
    <reaction evidence="1">
        <text>L-threonylcarbamoyladenylate + adenosine(37) in tRNA = N(6)-L-threonylcarbamoyladenosine(37) in tRNA + AMP + H(+)</text>
        <dbReference type="Rhea" id="RHEA:37059"/>
        <dbReference type="Rhea" id="RHEA-COMP:10162"/>
        <dbReference type="Rhea" id="RHEA-COMP:10163"/>
        <dbReference type="ChEBI" id="CHEBI:15378"/>
        <dbReference type="ChEBI" id="CHEBI:73682"/>
        <dbReference type="ChEBI" id="CHEBI:74411"/>
        <dbReference type="ChEBI" id="CHEBI:74418"/>
        <dbReference type="ChEBI" id="CHEBI:456215"/>
        <dbReference type="EC" id="2.3.1.234"/>
    </reaction>
</comment>
<comment type="cofactor">
    <cofactor evidence="1">
        <name>Fe(2+)</name>
        <dbReference type="ChEBI" id="CHEBI:29033"/>
    </cofactor>
    <text evidence="1">Binds 1 Fe(2+) ion per subunit.</text>
</comment>
<comment type="subcellular location">
    <subcellularLocation>
        <location evidence="1">Cytoplasm</location>
    </subcellularLocation>
</comment>
<comment type="similarity">
    <text evidence="1">Belongs to the KAE1 / TsaD family.</text>
</comment>
<evidence type="ECO:0000255" key="1">
    <source>
        <dbReference type="HAMAP-Rule" id="MF_01445"/>
    </source>
</evidence>
<proteinExistence type="inferred from homology"/>
<gene>
    <name evidence="1" type="primary">tsaD</name>
    <name type="synonym">gcp</name>
    <name type="ordered locus">Swoo_1157</name>
</gene>
<name>TSAD_SHEWM</name>
<dbReference type="EC" id="2.3.1.234" evidence="1"/>
<dbReference type="EMBL" id="CP000961">
    <property type="protein sequence ID" value="ACA85450.1"/>
    <property type="molecule type" value="Genomic_DNA"/>
</dbReference>
<dbReference type="RefSeq" id="WP_012323796.1">
    <property type="nucleotide sequence ID" value="NC_010506.1"/>
</dbReference>
<dbReference type="SMR" id="B1KHE2"/>
<dbReference type="STRING" id="392500.Swoo_1157"/>
<dbReference type="KEGG" id="swd:Swoo_1157"/>
<dbReference type="eggNOG" id="COG0533">
    <property type="taxonomic scope" value="Bacteria"/>
</dbReference>
<dbReference type="HOGENOM" id="CLU_023208_0_0_6"/>
<dbReference type="Proteomes" id="UP000002168">
    <property type="component" value="Chromosome"/>
</dbReference>
<dbReference type="GO" id="GO:0005737">
    <property type="term" value="C:cytoplasm"/>
    <property type="evidence" value="ECO:0007669"/>
    <property type="project" value="UniProtKB-SubCell"/>
</dbReference>
<dbReference type="GO" id="GO:0005506">
    <property type="term" value="F:iron ion binding"/>
    <property type="evidence" value="ECO:0007669"/>
    <property type="project" value="UniProtKB-UniRule"/>
</dbReference>
<dbReference type="GO" id="GO:0061711">
    <property type="term" value="F:N(6)-L-threonylcarbamoyladenine synthase activity"/>
    <property type="evidence" value="ECO:0007669"/>
    <property type="project" value="UniProtKB-EC"/>
</dbReference>
<dbReference type="GO" id="GO:0002949">
    <property type="term" value="P:tRNA threonylcarbamoyladenosine modification"/>
    <property type="evidence" value="ECO:0007669"/>
    <property type="project" value="UniProtKB-UniRule"/>
</dbReference>
<dbReference type="CDD" id="cd24133">
    <property type="entry name" value="ASKHA_NBD_TsaD_bac"/>
    <property type="match status" value="1"/>
</dbReference>
<dbReference type="FunFam" id="3.30.420.40:FF:000031">
    <property type="entry name" value="tRNA N6-adenosine threonylcarbamoyltransferase"/>
    <property type="match status" value="1"/>
</dbReference>
<dbReference type="Gene3D" id="3.30.420.40">
    <property type="match status" value="2"/>
</dbReference>
<dbReference type="HAMAP" id="MF_01445">
    <property type="entry name" value="TsaD"/>
    <property type="match status" value="1"/>
</dbReference>
<dbReference type="InterPro" id="IPR043129">
    <property type="entry name" value="ATPase_NBD"/>
</dbReference>
<dbReference type="InterPro" id="IPR000905">
    <property type="entry name" value="Gcp-like_dom"/>
</dbReference>
<dbReference type="InterPro" id="IPR017861">
    <property type="entry name" value="KAE1/TsaD"/>
</dbReference>
<dbReference type="InterPro" id="IPR017860">
    <property type="entry name" value="Peptidase_M22_CS"/>
</dbReference>
<dbReference type="InterPro" id="IPR022450">
    <property type="entry name" value="TsaD"/>
</dbReference>
<dbReference type="NCBIfam" id="TIGR00329">
    <property type="entry name" value="gcp_kae1"/>
    <property type="match status" value="1"/>
</dbReference>
<dbReference type="NCBIfam" id="TIGR03723">
    <property type="entry name" value="T6A_TsaD_YgjD"/>
    <property type="match status" value="1"/>
</dbReference>
<dbReference type="PANTHER" id="PTHR11735">
    <property type="entry name" value="TRNA N6-ADENOSINE THREONYLCARBAMOYLTRANSFERASE"/>
    <property type="match status" value="1"/>
</dbReference>
<dbReference type="PANTHER" id="PTHR11735:SF6">
    <property type="entry name" value="TRNA N6-ADENOSINE THREONYLCARBAMOYLTRANSFERASE, MITOCHONDRIAL"/>
    <property type="match status" value="1"/>
</dbReference>
<dbReference type="Pfam" id="PF00814">
    <property type="entry name" value="TsaD"/>
    <property type="match status" value="1"/>
</dbReference>
<dbReference type="PRINTS" id="PR00789">
    <property type="entry name" value="OSIALOPTASE"/>
</dbReference>
<dbReference type="SUPFAM" id="SSF53067">
    <property type="entry name" value="Actin-like ATPase domain"/>
    <property type="match status" value="2"/>
</dbReference>
<dbReference type="PROSITE" id="PS01016">
    <property type="entry name" value="GLYCOPROTEASE"/>
    <property type="match status" value="1"/>
</dbReference>
<feature type="chain" id="PRO_1000146023" description="tRNA N6-adenosine threonylcarbamoyltransferase">
    <location>
        <begin position="1"/>
        <end position="337"/>
    </location>
</feature>
<feature type="binding site" evidence="1">
    <location>
        <position position="111"/>
    </location>
    <ligand>
        <name>Fe cation</name>
        <dbReference type="ChEBI" id="CHEBI:24875"/>
    </ligand>
</feature>
<feature type="binding site" evidence="1">
    <location>
        <position position="115"/>
    </location>
    <ligand>
        <name>Fe cation</name>
        <dbReference type="ChEBI" id="CHEBI:24875"/>
    </ligand>
</feature>
<feature type="binding site" evidence="1">
    <location>
        <begin position="134"/>
        <end position="138"/>
    </location>
    <ligand>
        <name>substrate</name>
    </ligand>
</feature>
<feature type="binding site" evidence="1">
    <location>
        <position position="167"/>
    </location>
    <ligand>
        <name>substrate</name>
    </ligand>
</feature>
<feature type="binding site" evidence="1">
    <location>
        <position position="180"/>
    </location>
    <ligand>
        <name>substrate</name>
    </ligand>
</feature>
<feature type="binding site" evidence="1">
    <location>
        <position position="272"/>
    </location>
    <ligand>
        <name>substrate</name>
    </ligand>
</feature>
<feature type="binding site" evidence="1">
    <location>
        <position position="300"/>
    </location>
    <ligand>
        <name>Fe cation</name>
        <dbReference type="ChEBI" id="CHEBI:24875"/>
    </ligand>
</feature>
<sequence>MRVLGIETSCDETGVAVYDDEQGLLSHTLYSQVKLHADYGGVVPELASRDHVRKIVPLVKQALADANCTLDDIDGVAYTKGPGLVGALLVGACMGRALAYSWDKPAIGVHHMEGHLLAPMLEDDVPAFPFLALLVSGGHSMLVAVEGIGKYEVLGESVDDAAGEAFDKTAKLMGLDYPGGPRLAKLAAKGESGHYRFPRPMTDKPGLNFSFSGLKTFAANTIAAESDDEQTRANIALAFEEAVVDTLSIKCRRALKQTGYKNLVIAGGVSANTRLRSSLAEMMTSLGGKVYYPRGEFCTDNGAMIAYAGLQRLKAGQTDDLGVKGIPRWPLDTLPPV</sequence>
<accession>B1KHE2</accession>
<protein>
    <recommendedName>
        <fullName evidence="1">tRNA N6-adenosine threonylcarbamoyltransferase</fullName>
        <ecNumber evidence="1">2.3.1.234</ecNumber>
    </recommendedName>
    <alternativeName>
        <fullName evidence="1">N6-L-threonylcarbamoyladenine synthase</fullName>
        <shortName evidence="1">t(6)A synthase</shortName>
    </alternativeName>
    <alternativeName>
        <fullName evidence="1">t(6)A37 threonylcarbamoyladenosine biosynthesis protein TsaD</fullName>
    </alternativeName>
    <alternativeName>
        <fullName evidence="1">tRNA threonylcarbamoyladenosine biosynthesis protein TsaD</fullName>
    </alternativeName>
</protein>
<keyword id="KW-0012">Acyltransferase</keyword>
<keyword id="KW-0963">Cytoplasm</keyword>
<keyword id="KW-0408">Iron</keyword>
<keyword id="KW-0479">Metal-binding</keyword>
<keyword id="KW-1185">Reference proteome</keyword>
<keyword id="KW-0808">Transferase</keyword>
<keyword id="KW-0819">tRNA processing</keyword>
<reference key="1">
    <citation type="submission" date="2008-02" db="EMBL/GenBank/DDBJ databases">
        <title>Complete sequence of Shewanella woodyi ATCC 51908.</title>
        <authorList>
            <consortium name="US DOE Joint Genome Institute"/>
            <person name="Copeland A."/>
            <person name="Lucas S."/>
            <person name="Lapidus A."/>
            <person name="Glavina del Rio T."/>
            <person name="Dalin E."/>
            <person name="Tice H."/>
            <person name="Bruce D."/>
            <person name="Goodwin L."/>
            <person name="Pitluck S."/>
            <person name="Sims D."/>
            <person name="Brettin T."/>
            <person name="Detter J.C."/>
            <person name="Han C."/>
            <person name="Kuske C.R."/>
            <person name="Schmutz J."/>
            <person name="Larimer F."/>
            <person name="Land M."/>
            <person name="Hauser L."/>
            <person name="Kyrpides N."/>
            <person name="Lykidis A."/>
            <person name="Zhao J.-S."/>
            <person name="Richardson P."/>
        </authorList>
    </citation>
    <scope>NUCLEOTIDE SEQUENCE [LARGE SCALE GENOMIC DNA]</scope>
    <source>
        <strain>ATCC 51908 / MS32</strain>
    </source>
</reference>
<organism>
    <name type="scientific">Shewanella woodyi (strain ATCC 51908 / MS32)</name>
    <dbReference type="NCBI Taxonomy" id="392500"/>
    <lineage>
        <taxon>Bacteria</taxon>
        <taxon>Pseudomonadati</taxon>
        <taxon>Pseudomonadota</taxon>
        <taxon>Gammaproteobacteria</taxon>
        <taxon>Alteromonadales</taxon>
        <taxon>Shewanellaceae</taxon>
        <taxon>Shewanella</taxon>
    </lineage>
</organism>